<reference key="1">
    <citation type="journal article" date="2005" name="Proc. Natl. Acad. Sci. U.S.A.">
        <title>Comparison of the complete genome sequences of Pseudomonas syringae pv. syringae B728a and pv. tomato DC3000.</title>
        <authorList>
            <person name="Feil H."/>
            <person name="Feil W.S."/>
            <person name="Chain P."/>
            <person name="Larimer F."/>
            <person name="Dibartolo G."/>
            <person name="Copeland A."/>
            <person name="Lykidis A."/>
            <person name="Trong S."/>
            <person name="Nolan M."/>
            <person name="Goltsman E."/>
            <person name="Thiel J."/>
            <person name="Malfatti S."/>
            <person name="Loper J.E."/>
            <person name="Lapidus A."/>
            <person name="Detter J.C."/>
            <person name="Land M."/>
            <person name="Richardson P.M."/>
            <person name="Kyrpides N.C."/>
            <person name="Ivanova N."/>
            <person name="Lindow S.E."/>
        </authorList>
    </citation>
    <scope>NUCLEOTIDE SEQUENCE [LARGE SCALE GENOMIC DNA]</scope>
    <source>
        <strain>B728a</strain>
    </source>
</reference>
<accession>Q4ZML8</accession>
<gene>
    <name evidence="1" type="primary">coq7</name>
    <name type="ordered locus">Psyr_4574</name>
</gene>
<keyword id="KW-1003">Cell membrane</keyword>
<keyword id="KW-0408">Iron</keyword>
<keyword id="KW-0472">Membrane</keyword>
<keyword id="KW-0479">Metal-binding</keyword>
<keyword id="KW-0503">Monooxygenase</keyword>
<keyword id="KW-0560">Oxidoreductase</keyword>
<keyword id="KW-0831">Ubiquinone biosynthesis</keyword>
<organism>
    <name type="scientific">Pseudomonas syringae pv. syringae (strain B728a)</name>
    <dbReference type="NCBI Taxonomy" id="205918"/>
    <lineage>
        <taxon>Bacteria</taxon>
        <taxon>Pseudomonadati</taxon>
        <taxon>Pseudomonadota</taxon>
        <taxon>Gammaproteobacteria</taxon>
        <taxon>Pseudomonadales</taxon>
        <taxon>Pseudomonadaceae</taxon>
        <taxon>Pseudomonas</taxon>
        <taxon>Pseudomonas syringae</taxon>
    </lineage>
</organism>
<protein>
    <recommendedName>
        <fullName evidence="1">3-demethoxyubiquinol 3-hydroxylase</fullName>
        <shortName evidence="1">DMQ hydroxylase</shortName>
        <ecNumber evidence="1">1.14.99.60</ecNumber>
    </recommendedName>
    <alternativeName>
        <fullName evidence="1">2-nonaprenyl-3-methyl-6-methoxy-1,4-benzoquinol hydroxylase</fullName>
    </alternativeName>
</protein>
<sequence length="215" mass="23712">MATERQYSPLDRLLLQADSAMRTLLPSSAHSQRPSPAVVQPEHKMSEADTRHVAGLMRINHTGEVCAQALYQGQALTAKLPKVRKAMERAAEEEIDHLVWCEQRIHQLGSHTSVLNPLFYSLSFGMGAVAGVISDRVSLGFVAATEDQVCKHLAEHLEQLPTEDGKSRAILQQMLSDEEHHAESALEAGGFRFPAPVKFGMSVLAKVMTKSTYRI</sequence>
<name>COQ7_PSEU2</name>
<dbReference type="EC" id="1.14.99.60" evidence="1"/>
<dbReference type="EMBL" id="CP000075">
    <property type="protein sequence ID" value="AAY39604.1"/>
    <property type="molecule type" value="Genomic_DNA"/>
</dbReference>
<dbReference type="RefSeq" id="WP_011269103.1">
    <property type="nucleotide sequence ID" value="NC_007005.1"/>
</dbReference>
<dbReference type="RefSeq" id="YP_237642.1">
    <property type="nucleotide sequence ID" value="NC_007005.1"/>
</dbReference>
<dbReference type="SMR" id="Q4ZML8"/>
<dbReference type="STRING" id="205918.Psyr_4574"/>
<dbReference type="KEGG" id="psb:Psyr_4574"/>
<dbReference type="PATRIC" id="fig|205918.7.peg.4713"/>
<dbReference type="eggNOG" id="COG2941">
    <property type="taxonomic scope" value="Bacteria"/>
</dbReference>
<dbReference type="HOGENOM" id="CLU_088601_0_0_6"/>
<dbReference type="OrthoDB" id="5192789at2"/>
<dbReference type="UniPathway" id="UPA00232"/>
<dbReference type="Proteomes" id="UP000000426">
    <property type="component" value="Chromosome"/>
</dbReference>
<dbReference type="GO" id="GO:0005886">
    <property type="term" value="C:plasma membrane"/>
    <property type="evidence" value="ECO:0007669"/>
    <property type="project" value="UniProtKB-SubCell"/>
</dbReference>
<dbReference type="GO" id="GO:0008682">
    <property type="term" value="F:3-demethoxyubiquinol 3-hydroxylase activity"/>
    <property type="evidence" value="ECO:0007669"/>
    <property type="project" value="UniProtKB-EC"/>
</dbReference>
<dbReference type="GO" id="GO:0046872">
    <property type="term" value="F:metal ion binding"/>
    <property type="evidence" value="ECO:0007669"/>
    <property type="project" value="UniProtKB-KW"/>
</dbReference>
<dbReference type="GO" id="GO:0006744">
    <property type="term" value="P:ubiquinone biosynthetic process"/>
    <property type="evidence" value="ECO:0007669"/>
    <property type="project" value="UniProtKB-UniRule"/>
</dbReference>
<dbReference type="CDD" id="cd01042">
    <property type="entry name" value="DMQH"/>
    <property type="match status" value="1"/>
</dbReference>
<dbReference type="Gene3D" id="1.20.1260.10">
    <property type="match status" value="1"/>
</dbReference>
<dbReference type="HAMAP" id="MF_01658">
    <property type="entry name" value="COQ7"/>
    <property type="match status" value="1"/>
</dbReference>
<dbReference type="InterPro" id="IPR047809">
    <property type="entry name" value="COQ7_proteobact"/>
</dbReference>
<dbReference type="InterPro" id="IPR012347">
    <property type="entry name" value="Ferritin-like"/>
</dbReference>
<dbReference type="InterPro" id="IPR009078">
    <property type="entry name" value="Ferritin-like_SF"/>
</dbReference>
<dbReference type="InterPro" id="IPR011566">
    <property type="entry name" value="Ubq_synth_Coq7"/>
</dbReference>
<dbReference type="NCBIfam" id="NF033656">
    <property type="entry name" value="DMQ_monoox_COQ7"/>
    <property type="match status" value="1"/>
</dbReference>
<dbReference type="PANTHER" id="PTHR11237:SF4">
    <property type="entry name" value="5-DEMETHOXYUBIQUINONE HYDROXYLASE, MITOCHONDRIAL"/>
    <property type="match status" value="1"/>
</dbReference>
<dbReference type="PANTHER" id="PTHR11237">
    <property type="entry name" value="COENZYME Q10 BIOSYNTHESIS PROTEIN 7"/>
    <property type="match status" value="1"/>
</dbReference>
<dbReference type="Pfam" id="PF03232">
    <property type="entry name" value="COQ7"/>
    <property type="match status" value="1"/>
</dbReference>
<dbReference type="SUPFAM" id="SSF47240">
    <property type="entry name" value="Ferritin-like"/>
    <property type="match status" value="1"/>
</dbReference>
<evidence type="ECO:0000255" key="1">
    <source>
        <dbReference type="HAMAP-Rule" id="MF_01658"/>
    </source>
</evidence>
<evidence type="ECO:0000256" key="2">
    <source>
        <dbReference type="SAM" id="MobiDB-lite"/>
    </source>
</evidence>
<proteinExistence type="inferred from homology"/>
<comment type="function">
    <text evidence="1">Catalyzes the hydroxylation of 2-nonaprenyl-3-methyl-6-methoxy-1,4-benzoquinol during ubiquinone biosynthesis.</text>
</comment>
<comment type="catalytic activity">
    <reaction evidence="1">
        <text>a 5-methoxy-2-methyl-3-(all-trans-polyprenyl)benzene-1,4-diol + AH2 + O2 = a 3-demethylubiquinol + A + H2O</text>
        <dbReference type="Rhea" id="RHEA:50908"/>
        <dbReference type="Rhea" id="RHEA-COMP:10859"/>
        <dbReference type="Rhea" id="RHEA-COMP:10914"/>
        <dbReference type="ChEBI" id="CHEBI:13193"/>
        <dbReference type="ChEBI" id="CHEBI:15377"/>
        <dbReference type="ChEBI" id="CHEBI:15379"/>
        <dbReference type="ChEBI" id="CHEBI:17499"/>
        <dbReference type="ChEBI" id="CHEBI:84167"/>
        <dbReference type="ChEBI" id="CHEBI:84422"/>
        <dbReference type="EC" id="1.14.99.60"/>
    </reaction>
</comment>
<comment type="cofactor">
    <cofactor evidence="1">
        <name>Fe cation</name>
        <dbReference type="ChEBI" id="CHEBI:24875"/>
    </cofactor>
    <text evidence="1">Binds 2 iron ions per subunit.</text>
</comment>
<comment type="pathway">
    <text evidence="1">Cofactor biosynthesis; ubiquinone biosynthesis.</text>
</comment>
<comment type="subcellular location">
    <subcellularLocation>
        <location evidence="1">Cell membrane</location>
        <topology evidence="1">Peripheral membrane protein</topology>
    </subcellularLocation>
</comment>
<comment type="similarity">
    <text evidence="1">Belongs to the COQ7 family.</text>
</comment>
<feature type="chain" id="PRO_0000338720" description="3-demethoxyubiquinol 3-hydroxylase">
    <location>
        <begin position="1"/>
        <end position="215"/>
    </location>
</feature>
<feature type="region of interest" description="Disordered" evidence="2">
    <location>
        <begin position="26"/>
        <end position="47"/>
    </location>
</feature>
<feature type="binding site" evidence="1">
    <location>
        <position position="64"/>
    </location>
    <ligand>
        <name>Fe cation</name>
        <dbReference type="ChEBI" id="CHEBI:24875"/>
        <label>1</label>
    </ligand>
</feature>
<feature type="binding site" evidence="1">
    <location>
        <position position="94"/>
    </location>
    <ligand>
        <name>Fe cation</name>
        <dbReference type="ChEBI" id="CHEBI:24875"/>
        <label>1</label>
    </ligand>
</feature>
<feature type="binding site" evidence="1">
    <location>
        <position position="94"/>
    </location>
    <ligand>
        <name>Fe cation</name>
        <dbReference type="ChEBI" id="CHEBI:24875"/>
        <label>2</label>
    </ligand>
</feature>
<feature type="binding site" evidence="1">
    <location>
        <position position="97"/>
    </location>
    <ligand>
        <name>Fe cation</name>
        <dbReference type="ChEBI" id="CHEBI:24875"/>
        <label>1</label>
    </ligand>
</feature>
<feature type="binding site" evidence="1">
    <location>
        <position position="146"/>
    </location>
    <ligand>
        <name>Fe cation</name>
        <dbReference type="ChEBI" id="CHEBI:24875"/>
        <label>2</label>
    </ligand>
</feature>
<feature type="binding site" evidence="1">
    <location>
        <position position="178"/>
    </location>
    <ligand>
        <name>Fe cation</name>
        <dbReference type="ChEBI" id="CHEBI:24875"/>
        <label>1</label>
    </ligand>
</feature>
<feature type="binding site" evidence="1">
    <location>
        <position position="178"/>
    </location>
    <ligand>
        <name>Fe cation</name>
        <dbReference type="ChEBI" id="CHEBI:24875"/>
        <label>2</label>
    </ligand>
</feature>
<feature type="binding site" evidence="1">
    <location>
        <position position="181"/>
    </location>
    <ligand>
        <name>Fe cation</name>
        <dbReference type="ChEBI" id="CHEBI:24875"/>
        <label>2</label>
    </ligand>
</feature>